<evidence type="ECO:0000255" key="1">
    <source>
        <dbReference type="HAMAP-Rule" id="MF_00368"/>
    </source>
</evidence>
<evidence type="ECO:0000305" key="2"/>
<gene>
    <name evidence="1" type="primary">rplL</name>
    <name type="ordered locus">Sfum_1548</name>
</gene>
<dbReference type="EMBL" id="CP000478">
    <property type="protein sequence ID" value="ABK17235.1"/>
    <property type="molecule type" value="Genomic_DNA"/>
</dbReference>
<dbReference type="RefSeq" id="WP_011698406.1">
    <property type="nucleotide sequence ID" value="NC_008554.1"/>
</dbReference>
<dbReference type="SMR" id="A0LII3"/>
<dbReference type="FunCoup" id="A0LII3">
    <property type="interactions" value="645"/>
</dbReference>
<dbReference type="STRING" id="335543.Sfum_1548"/>
<dbReference type="KEGG" id="sfu:Sfum_1548"/>
<dbReference type="eggNOG" id="COG0222">
    <property type="taxonomic scope" value="Bacteria"/>
</dbReference>
<dbReference type="HOGENOM" id="CLU_086499_3_0_7"/>
<dbReference type="InParanoid" id="A0LII3"/>
<dbReference type="OrthoDB" id="9811748at2"/>
<dbReference type="Proteomes" id="UP000001784">
    <property type="component" value="Chromosome"/>
</dbReference>
<dbReference type="GO" id="GO:0022625">
    <property type="term" value="C:cytosolic large ribosomal subunit"/>
    <property type="evidence" value="ECO:0007669"/>
    <property type="project" value="TreeGrafter"/>
</dbReference>
<dbReference type="GO" id="GO:0003729">
    <property type="term" value="F:mRNA binding"/>
    <property type="evidence" value="ECO:0007669"/>
    <property type="project" value="TreeGrafter"/>
</dbReference>
<dbReference type="GO" id="GO:0003735">
    <property type="term" value="F:structural constituent of ribosome"/>
    <property type="evidence" value="ECO:0007669"/>
    <property type="project" value="InterPro"/>
</dbReference>
<dbReference type="GO" id="GO:0006412">
    <property type="term" value="P:translation"/>
    <property type="evidence" value="ECO:0007669"/>
    <property type="project" value="UniProtKB-UniRule"/>
</dbReference>
<dbReference type="CDD" id="cd00387">
    <property type="entry name" value="Ribosomal_L7_L12"/>
    <property type="match status" value="1"/>
</dbReference>
<dbReference type="FunFam" id="3.30.1390.10:FF:000001">
    <property type="entry name" value="50S ribosomal protein L7/L12"/>
    <property type="match status" value="1"/>
</dbReference>
<dbReference type="Gene3D" id="3.30.1390.10">
    <property type="match status" value="1"/>
</dbReference>
<dbReference type="Gene3D" id="1.20.5.710">
    <property type="entry name" value="Single helix bin"/>
    <property type="match status" value="1"/>
</dbReference>
<dbReference type="HAMAP" id="MF_00368">
    <property type="entry name" value="Ribosomal_bL12"/>
    <property type="match status" value="1"/>
</dbReference>
<dbReference type="InterPro" id="IPR000206">
    <property type="entry name" value="Ribosomal_bL12"/>
</dbReference>
<dbReference type="InterPro" id="IPR013823">
    <property type="entry name" value="Ribosomal_bL12_C"/>
</dbReference>
<dbReference type="InterPro" id="IPR014719">
    <property type="entry name" value="Ribosomal_bL12_C/ClpS-like"/>
</dbReference>
<dbReference type="InterPro" id="IPR008932">
    <property type="entry name" value="Ribosomal_bL12_oligo"/>
</dbReference>
<dbReference type="InterPro" id="IPR036235">
    <property type="entry name" value="Ribosomal_bL12_oligo_N_sf"/>
</dbReference>
<dbReference type="NCBIfam" id="TIGR00855">
    <property type="entry name" value="L12"/>
    <property type="match status" value="1"/>
</dbReference>
<dbReference type="PANTHER" id="PTHR45987">
    <property type="entry name" value="39S RIBOSOMAL PROTEIN L12"/>
    <property type="match status" value="1"/>
</dbReference>
<dbReference type="PANTHER" id="PTHR45987:SF4">
    <property type="entry name" value="LARGE RIBOSOMAL SUBUNIT PROTEIN BL12M"/>
    <property type="match status" value="1"/>
</dbReference>
<dbReference type="Pfam" id="PF00542">
    <property type="entry name" value="Ribosomal_L12"/>
    <property type="match status" value="1"/>
</dbReference>
<dbReference type="Pfam" id="PF16320">
    <property type="entry name" value="Ribosomal_L12_N"/>
    <property type="match status" value="1"/>
</dbReference>
<dbReference type="SUPFAM" id="SSF54736">
    <property type="entry name" value="ClpS-like"/>
    <property type="match status" value="1"/>
</dbReference>
<dbReference type="SUPFAM" id="SSF48300">
    <property type="entry name" value="Ribosomal protein L7/12, oligomerisation (N-terminal) domain"/>
    <property type="match status" value="1"/>
</dbReference>
<accession>A0LII3</accession>
<keyword id="KW-1185">Reference proteome</keyword>
<keyword id="KW-0687">Ribonucleoprotein</keyword>
<keyword id="KW-0689">Ribosomal protein</keyword>
<feature type="chain" id="PRO_1000059929" description="Large ribosomal subunit protein bL12">
    <location>
        <begin position="1"/>
        <end position="127"/>
    </location>
</feature>
<reference key="1">
    <citation type="submission" date="2006-10" db="EMBL/GenBank/DDBJ databases">
        <title>Complete sequence of Syntrophobacter fumaroxidans MPOB.</title>
        <authorList>
            <consortium name="US DOE Joint Genome Institute"/>
            <person name="Copeland A."/>
            <person name="Lucas S."/>
            <person name="Lapidus A."/>
            <person name="Barry K."/>
            <person name="Detter J.C."/>
            <person name="Glavina del Rio T."/>
            <person name="Hammon N."/>
            <person name="Israni S."/>
            <person name="Pitluck S."/>
            <person name="Goltsman E.G."/>
            <person name="Martinez M."/>
            <person name="Schmutz J."/>
            <person name="Larimer F."/>
            <person name="Land M."/>
            <person name="Hauser L."/>
            <person name="Kyrpides N."/>
            <person name="Kim E."/>
            <person name="Boone D.R."/>
            <person name="Brockman F."/>
            <person name="Culley D."/>
            <person name="Ferry J."/>
            <person name="Gunsalus R."/>
            <person name="McInerney M.J."/>
            <person name="Morrison M."/>
            <person name="Plugge C."/>
            <person name="Rohlin L."/>
            <person name="Scholten J."/>
            <person name="Sieber J."/>
            <person name="Stams A.J.M."/>
            <person name="Worm P."/>
            <person name="Henstra A.M."/>
            <person name="Richardson P."/>
        </authorList>
    </citation>
    <scope>NUCLEOTIDE SEQUENCE [LARGE SCALE GENOMIC DNA]</scope>
    <source>
        <strain>DSM 10017 / MPOB</strain>
    </source>
</reference>
<comment type="function">
    <text evidence="1">Forms part of the ribosomal stalk which helps the ribosome interact with GTP-bound translation factors. Is thus essential for accurate translation.</text>
</comment>
<comment type="subunit">
    <text evidence="1">Homodimer. Part of the ribosomal stalk of the 50S ribosomal subunit. Forms a multimeric L10(L12)X complex, where L10 forms an elongated spine to which 2 to 4 L12 dimers bind in a sequential fashion. Binds GTP-bound translation factors.</text>
</comment>
<comment type="similarity">
    <text evidence="1">Belongs to the bacterial ribosomal protein bL12 family.</text>
</comment>
<proteinExistence type="inferred from homology"/>
<protein>
    <recommendedName>
        <fullName evidence="1">Large ribosomal subunit protein bL12</fullName>
    </recommendedName>
    <alternativeName>
        <fullName evidence="2">50S ribosomal protein L7/L12</fullName>
    </alternativeName>
</protein>
<organism>
    <name type="scientific">Syntrophobacter fumaroxidans (strain DSM 10017 / MPOB)</name>
    <dbReference type="NCBI Taxonomy" id="335543"/>
    <lineage>
        <taxon>Bacteria</taxon>
        <taxon>Pseudomonadati</taxon>
        <taxon>Thermodesulfobacteriota</taxon>
        <taxon>Syntrophobacteria</taxon>
        <taxon>Syntrophobacterales</taxon>
        <taxon>Syntrophobacteraceae</taxon>
        <taxon>Syntrophobacter</taxon>
    </lineage>
</organism>
<sequence>MSTISKEDVIKFIENMTVLELSELVKELEERFGVSAAAPVAMAAMPAGAAEAAPVAEQTEFSVVITGVGDKKIQVIKEVRAITNLGLKEAKDLVEKVPGVVKEAIPKDEAEAIAKQLTEAGATVEIK</sequence>
<name>RL7_SYNFM</name>